<feature type="chain" id="PRO_0000211421" description="Calcipressin-3">
    <location>
        <begin position="1"/>
        <end position="239"/>
    </location>
</feature>
<feature type="region of interest" description="Disordered" evidence="3">
    <location>
        <begin position="1"/>
        <end position="25"/>
    </location>
</feature>
<feature type="region of interest" description="Calcineurin-binding" evidence="2">
    <location>
        <begin position="183"/>
        <end position="203"/>
    </location>
</feature>
<feature type="region of interest" description="Disordered" evidence="3">
    <location>
        <begin position="202"/>
        <end position="239"/>
    </location>
</feature>
<feature type="compositionally biased region" description="Polar residues" evidence="3">
    <location>
        <begin position="7"/>
        <end position="19"/>
    </location>
</feature>
<reference key="1">
    <citation type="journal article" date="2000" name="Gene">
        <title>The murine DSCR1-like (Down syndrome candidate region 1) gene family: conserved synteny with the human orthologous genes.</title>
        <authorList>
            <person name="Strippoli P."/>
            <person name="Petrini M."/>
            <person name="Lenzi L."/>
            <person name="Carinci P."/>
            <person name="Zannotti M."/>
        </authorList>
    </citation>
    <scope>NUCLEOTIDE SEQUENCE [MRNA]</scope>
    <source>
        <strain>BALB/cJ</strain>
        <tissue>Brain</tissue>
    </source>
</reference>
<reference key="2">
    <citation type="journal article" date="2005" name="Science">
        <title>The transcriptional landscape of the mammalian genome.</title>
        <authorList>
            <person name="Carninci P."/>
            <person name="Kasukawa T."/>
            <person name="Katayama S."/>
            <person name="Gough J."/>
            <person name="Frith M.C."/>
            <person name="Maeda N."/>
            <person name="Oyama R."/>
            <person name="Ravasi T."/>
            <person name="Lenhard B."/>
            <person name="Wells C."/>
            <person name="Kodzius R."/>
            <person name="Shimokawa K."/>
            <person name="Bajic V.B."/>
            <person name="Brenner S.E."/>
            <person name="Batalov S."/>
            <person name="Forrest A.R."/>
            <person name="Zavolan M."/>
            <person name="Davis M.J."/>
            <person name="Wilming L.G."/>
            <person name="Aidinis V."/>
            <person name="Allen J.E."/>
            <person name="Ambesi-Impiombato A."/>
            <person name="Apweiler R."/>
            <person name="Aturaliya R.N."/>
            <person name="Bailey T.L."/>
            <person name="Bansal M."/>
            <person name="Baxter L."/>
            <person name="Beisel K.W."/>
            <person name="Bersano T."/>
            <person name="Bono H."/>
            <person name="Chalk A.M."/>
            <person name="Chiu K.P."/>
            <person name="Choudhary V."/>
            <person name="Christoffels A."/>
            <person name="Clutterbuck D.R."/>
            <person name="Crowe M.L."/>
            <person name="Dalla E."/>
            <person name="Dalrymple B.P."/>
            <person name="de Bono B."/>
            <person name="Della Gatta G."/>
            <person name="di Bernardo D."/>
            <person name="Down T."/>
            <person name="Engstrom P."/>
            <person name="Fagiolini M."/>
            <person name="Faulkner G."/>
            <person name="Fletcher C.F."/>
            <person name="Fukushima T."/>
            <person name="Furuno M."/>
            <person name="Futaki S."/>
            <person name="Gariboldi M."/>
            <person name="Georgii-Hemming P."/>
            <person name="Gingeras T.R."/>
            <person name="Gojobori T."/>
            <person name="Green R.E."/>
            <person name="Gustincich S."/>
            <person name="Harbers M."/>
            <person name="Hayashi Y."/>
            <person name="Hensch T.K."/>
            <person name="Hirokawa N."/>
            <person name="Hill D."/>
            <person name="Huminiecki L."/>
            <person name="Iacono M."/>
            <person name="Ikeo K."/>
            <person name="Iwama A."/>
            <person name="Ishikawa T."/>
            <person name="Jakt M."/>
            <person name="Kanapin A."/>
            <person name="Katoh M."/>
            <person name="Kawasawa Y."/>
            <person name="Kelso J."/>
            <person name="Kitamura H."/>
            <person name="Kitano H."/>
            <person name="Kollias G."/>
            <person name="Krishnan S.P."/>
            <person name="Kruger A."/>
            <person name="Kummerfeld S.K."/>
            <person name="Kurochkin I.V."/>
            <person name="Lareau L.F."/>
            <person name="Lazarevic D."/>
            <person name="Lipovich L."/>
            <person name="Liu J."/>
            <person name="Liuni S."/>
            <person name="McWilliam S."/>
            <person name="Madan Babu M."/>
            <person name="Madera M."/>
            <person name="Marchionni L."/>
            <person name="Matsuda H."/>
            <person name="Matsuzawa S."/>
            <person name="Miki H."/>
            <person name="Mignone F."/>
            <person name="Miyake S."/>
            <person name="Morris K."/>
            <person name="Mottagui-Tabar S."/>
            <person name="Mulder N."/>
            <person name="Nakano N."/>
            <person name="Nakauchi H."/>
            <person name="Ng P."/>
            <person name="Nilsson R."/>
            <person name="Nishiguchi S."/>
            <person name="Nishikawa S."/>
            <person name="Nori F."/>
            <person name="Ohara O."/>
            <person name="Okazaki Y."/>
            <person name="Orlando V."/>
            <person name="Pang K.C."/>
            <person name="Pavan W.J."/>
            <person name="Pavesi G."/>
            <person name="Pesole G."/>
            <person name="Petrovsky N."/>
            <person name="Piazza S."/>
            <person name="Reed J."/>
            <person name="Reid J.F."/>
            <person name="Ring B.Z."/>
            <person name="Ringwald M."/>
            <person name="Rost B."/>
            <person name="Ruan Y."/>
            <person name="Salzberg S.L."/>
            <person name="Sandelin A."/>
            <person name="Schneider C."/>
            <person name="Schoenbach C."/>
            <person name="Sekiguchi K."/>
            <person name="Semple C.A."/>
            <person name="Seno S."/>
            <person name="Sessa L."/>
            <person name="Sheng Y."/>
            <person name="Shibata Y."/>
            <person name="Shimada H."/>
            <person name="Shimada K."/>
            <person name="Silva D."/>
            <person name="Sinclair B."/>
            <person name="Sperling S."/>
            <person name="Stupka E."/>
            <person name="Sugiura K."/>
            <person name="Sultana R."/>
            <person name="Takenaka Y."/>
            <person name="Taki K."/>
            <person name="Tammoja K."/>
            <person name="Tan S.L."/>
            <person name="Tang S."/>
            <person name="Taylor M.S."/>
            <person name="Tegner J."/>
            <person name="Teichmann S.A."/>
            <person name="Ueda H.R."/>
            <person name="van Nimwegen E."/>
            <person name="Verardo R."/>
            <person name="Wei C.L."/>
            <person name="Yagi K."/>
            <person name="Yamanishi H."/>
            <person name="Zabarovsky E."/>
            <person name="Zhu S."/>
            <person name="Zimmer A."/>
            <person name="Hide W."/>
            <person name="Bult C."/>
            <person name="Grimmond S.M."/>
            <person name="Teasdale R.D."/>
            <person name="Liu E.T."/>
            <person name="Brusic V."/>
            <person name="Quackenbush J."/>
            <person name="Wahlestedt C."/>
            <person name="Mattick J.S."/>
            <person name="Hume D.A."/>
            <person name="Kai C."/>
            <person name="Sasaki D."/>
            <person name="Tomaru Y."/>
            <person name="Fukuda S."/>
            <person name="Kanamori-Katayama M."/>
            <person name="Suzuki M."/>
            <person name="Aoki J."/>
            <person name="Arakawa T."/>
            <person name="Iida J."/>
            <person name="Imamura K."/>
            <person name="Itoh M."/>
            <person name="Kato T."/>
            <person name="Kawaji H."/>
            <person name="Kawagashira N."/>
            <person name="Kawashima T."/>
            <person name="Kojima M."/>
            <person name="Kondo S."/>
            <person name="Konno H."/>
            <person name="Nakano K."/>
            <person name="Ninomiya N."/>
            <person name="Nishio T."/>
            <person name="Okada M."/>
            <person name="Plessy C."/>
            <person name="Shibata K."/>
            <person name="Shiraki T."/>
            <person name="Suzuki S."/>
            <person name="Tagami M."/>
            <person name="Waki K."/>
            <person name="Watahiki A."/>
            <person name="Okamura-Oho Y."/>
            <person name="Suzuki H."/>
            <person name="Kawai J."/>
            <person name="Hayashizaki Y."/>
        </authorList>
    </citation>
    <scope>NUCLEOTIDE SEQUENCE [LARGE SCALE MRNA]</scope>
    <source>
        <strain>C57BL/6J</strain>
        <strain>NOD</strain>
        <tissue>Embryonic head</tissue>
        <tissue>Thymus</tissue>
    </source>
</reference>
<reference key="3">
    <citation type="journal article" date="2009" name="PLoS Biol.">
        <title>Lineage-specific biology revealed by a finished genome assembly of the mouse.</title>
        <authorList>
            <person name="Church D.M."/>
            <person name="Goodstadt L."/>
            <person name="Hillier L.W."/>
            <person name="Zody M.C."/>
            <person name="Goldstein S."/>
            <person name="She X."/>
            <person name="Bult C.J."/>
            <person name="Agarwala R."/>
            <person name="Cherry J.L."/>
            <person name="DiCuccio M."/>
            <person name="Hlavina W."/>
            <person name="Kapustin Y."/>
            <person name="Meric P."/>
            <person name="Maglott D."/>
            <person name="Birtle Z."/>
            <person name="Marques A.C."/>
            <person name="Graves T."/>
            <person name="Zhou S."/>
            <person name="Teague B."/>
            <person name="Potamousis K."/>
            <person name="Churas C."/>
            <person name="Place M."/>
            <person name="Herschleb J."/>
            <person name="Runnheim R."/>
            <person name="Forrest D."/>
            <person name="Amos-Landgraf J."/>
            <person name="Schwartz D.C."/>
            <person name="Cheng Z."/>
            <person name="Lindblad-Toh K."/>
            <person name="Eichler E.E."/>
            <person name="Ponting C.P."/>
        </authorList>
    </citation>
    <scope>NUCLEOTIDE SEQUENCE [LARGE SCALE GENOMIC DNA]</scope>
    <source>
        <strain>C57BL/6J</strain>
    </source>
</reference>
<reference key="4">
    <citation type="journal article" date="2004" name="Genome Res.">
        <title>The status, quality, and expansion of the NIH full-length cDNA project: the Mammalian Gene Collection (MGC).</title>
        <authorList>
            <consortium name="The MGC Project Team"/>
        </authorList>
    </citation>
    <scope>NUCLEOTIDE SEQUENCE [LARGE SCALE MRNA]</scope>
    <source>
        <strain>C57BL/6J</strain>
        <tissue>Brain</tissue>
    </source>
</reference>
<keyword id="KW-1185">Reference proteome</keyword>
<protein>
    <recommendedName>
        <fullName>Calcipressin-3</fullName>
    </recommendedName>
    <alternativeName>
        <fullName>Down syndrome candidate region 1-like protein 2</fullName>
    </alternativeName>
    <alternativeName>
        <fullName>Myocyte-enriched calcineurin-interacting protein 3</fullName>
        <shortName>MCIP3</shortName>
    </alternativeName>
    <alternativeName>
        <fullName>Regulator of calcineurin 3</fullName>
    </alternativeName>
</protein>
<evidence type="ECO:0000250" key="1"/>
<evidence type="ECO:0000250" key="2">
    <source>
        <dbReference type="UniProtKB" id="Q9UKA8"/>
    </source>
</evidence>
<evidence type="ECO:0000256" key="3">
    <source>
        <dbReference type="SAM" id="MobiDB-lite"/>
    </source>
</evidence>
<evidence type="ECO:0000305" key="4"/>
<sequence length="239" mass="27153">MLRDSLKSWNDSQSDLCSSDQEEEEEMVFGENEDGLEEMMDLSDLPTSLFACSVHEAVFEVQEQKERFEALFTLYDDQVTFQLFKSFRRVRINFSKPEAAARARIELHESEFHGRKLKLYFAQVQVSGEARDKSYLLPPQPTKQFLISPPASPPVGWKQSEDAMPVINYDLLCAVSKLGPGEKYELHAGTESTPSVVVHVCESETEEEEDTKNPKQKITQTRRPEAPTAALSERLDCAL</sequence>
<name>RCAN3_MOUSE</name>
<comment type="function">
    <text evidence="1">Inhibits calcineurin-dependent transcriptional responses by binding to the catalytic domain of calcineurin A. Could play a role during central nervous system development (By similarity).</text>
</comment>
<comment type="subunit">
    <text evidence="2">Interacts with protein phosphatase PPP3CA/calcineurin A.</text>
</comment>
<comment type="similarity">
    <text evidence="4">Belongs to the RCAN family.</text>
</comment>
<accession>Q9JKK0</accession>
<accession>Q3U2I5</accession>
<accession>Q9CX87</accession>
<proteinExistence type="evidence at transcript level"/>
<gene>
    <name type="primary">Rcan3</name>
    <name type="synonym">Dscr1l2</name>
</gene>
<organism>
    <name type="scientific">Mus musculus</name>
    <name type="common">Mouse</name>
    <dbReference type="NCBI Taxonomy" id="10090"/>
    <lineage>
        <taxon>Eukaryota</taxon>
        <taxon>Metazoa</taxon>
        <taxon>Chordata</taxon>
        <taxon>Craniata</taxon>
        <taxon>Vertebrata</taxon>
        <taxon>Euteleostomi</taxon>
        <taxon>Mammalia</taxon>
        <taxon>Eutheria</taxon>
        <taxon>Euarchontoglires</taxon>
        <taxon>Glires</taxon>
        <taxon>Rodentia</taxon>
        <taxon>Myomorpha</taxon>
        <taxon>Muroidea</taxon>
        <taxon>Muridae</taxon>
        <taxon>Murinae</taxon>
        <taxon>Mus</taxon>
        <taxon>Mus</taxon>
    </lineage>
</organism>
<dbReference type="EMBL" id="AF237888">
    <property type="protein sequence ID" value="AAF62539.1"/>
    <property type="molecule type" value="mRNA"/>
</dbReference>
<dbReference type="EMBL" id="AK019377">
    <property type="protein sequence ID" value="BAB31687.1"/>
    <property type="molecule type" value="mRNA"/>
</dbReference>
<dbReference type="EMBL" id="AK042201">
    <property type="protein sequence ID" value="BAE20626.1"/>
    <property type="molecule type" value="mRNA"/>
</dbReference>
<dbReference type="EMBL" id="AK155270">
    <property type="protein sequence ID" value="BAE33155.1"/>
    <property type="molecule type" value="mRNA"/>
</dbReference>
<dbReference type="EMBL" id="AL627185">
    <property type="status" value="NOT_ANNOTATED_CDS"/>
    <property type="molecule type" value="Genomic_DNA"/>
</dbReference>
<dbReference type="EMBL" id="BC059001">
    <property type="protein sequence ID" value="AAH59001.1"/>
    <property type="molecule type" value="mRNA"/>
</dbReference>
<dbReference type="CCDS" id="CCDS18785.1"/>
<dbReference type="RefSeq" id="NP_001405983.1">
    <property type="nucleotide sequence ID" value="NM_001419054.1"/>
</dbReference>
<dbReference type="RefSeq" id="NP_075356.1">
    <property type="nucleotide sequence ID" value="NM_022980.5"/>
</dbReference>
<dbReference type="RefSeq" id="XP_017175806.1">
    <property type="nucleotide sequence ID" value="XM_017320317.1"/>
</dbReference>
<dbReference type="SMR" id="Q9JKK0"/>
<dbReference type="FunCoup" id="Q9JKK0">
    <property type="interactions" value="2005"/>
</dbReference>
<dbReference type="STRING" id="10090.ENSMUSP00000030606"/>
<dbReference type="GlyGen" id="Q9JKK0">
    <property type="glycosylation" value="2 sites"/>
</dbReference>
<dbReference type="iPTMnet" id="Q9JKK0"/>
<dbReference type="PhosphoSitePlus" id="Q9JKK0"/>
<dbReference type="jPOST" id="Q9JKK0"/>
<dbReference type="PaxDb" id="10090-ENSMUSP00000030606"/>
<dbReference type="ProteomicsDB" id="255169"/>
<dbReference type="Pumba" id="Q9JKK0"/>
<dbReference type="Antibodypedia" id="30319">
    <property type="antibodies" value="250 antibodies from 22 providers"/>
</dbReference>
<dbReference type="DNASU" id="53902"/>
<dbReference type="Ensembl" id="ENSMUST00000030606.14">
    <property type="protein sequence ID" value="ENSMUSP00000030606.8"/>
    <property type="gene ID" value="ENSMUSG00000059713.13"/>
</dbReference>
<dbReference type="GeneID" id="53902"/>
<dbReference type="KEGG" id="mmu:53902"/>
<dbReference type="UCSC" id="uc008vgm.1">
    <property type="organism name" value="mouse"/>
</dbReference>
<dbReference type="AGR" id="MGI:1858220"/>
<dbReference type="CTD" id="11123"/>
<dbReference type="MGI" id="MGI:1858220">
    <property type="gene designation" value="Rcan3"/>
</dbReference>
<dbReference type="VEuPathDB" id="HostDB:ENSMUSG00000059713"/>
<dbReference type="eggNOG" id="KOG4019">
    <property type="taxonomic scope" value="Eukaryota"/>
</dbReference>
<dbReference type="GeneTree" id="ENSGT00940000159501"/>
<dbReference type="InParanoid" id="Q9JKK0"/>
<dbReference type="OMA" id="DMHRERF"/>
<dbReference type="OrthoDB" id="17212at2759"/>
<dbReference type="PhylomeDB" id="Q9JKK0"/>
<dbReference type="TreeFam" id="TF313579"/>
<dbReference type="BioGRID-ORCS" id="53902">
    <property type="hits" value="2 hits in 77 CRISPR screens"/>
</dbReference>
<dbReference type="ChiTaRS" id="Rcan3">
    <property type="organism name" value="mouse"/>
</dbReference>
<dbReference type="PRO" id="PR:Q9JKK0"/>
<dbReference type="Proteomes" id="UP000000589">
    <property type="component" value="Chromosome 4"/>
</dbReference>
<dbReference type="RNAct" id="Q9JKK0">
    <property type="molecule type" value="protein"/>
</dbReference>
<dbReference type="Bgee" id="ENSMUSG00000059713">
    <property type="expression patterns" value="Expressed in animal zygote and 231 other cell types or tissues"/>
</dbReference>
<dbReference type="ExpressionAtlas" id="Q9JKK0">
    <property type="expression patterns" value="baseline and differential"/>
</dbReference>
<dbReference type="GO" id="GO:0003676">
    <property type="term" value="F:nucleic acid binding"/>
    <property type="evidence" value="ECO:0007669"/>
    <property type="project" value="InterPro"/>
</dbReference>
<dbReference type="GO" id="GO:0019902">
    <property type="term" value="F:phosphatase binding"/>
    <property type="evidence" value="ECO:0007669"/>
    <property type="project" value="Ensembl"/>
</dbReference>
<dbReference type="GO" id="GO:0031013">
    <property type="term" value="F:troponin I binding"/>
    <property type="evidence" value="ECO:0007669"/>
    <property type="project" value="Ensembl"/>
</dbReference>
<dbReference type="GO" id="GO:0019722">
    <property type="term" value="P:calcium-mediated signaling"/>
    <property type="evidence" value="ECO:0007669"/>
    <property type="project" value="InterPro"/>
</dbReference>
<dbReference type="FunFam" id="3.30.70.330:FF:000092">
    <property type="entry name" value="Calcipressin-2 isoform 2"/>
    <property type="match status" value="1"/>
</dbReference>
<dbReference type="Gene3D" id="3.30.70.330">
    <property type="match status" value="1"/>
</dbReference>
<dbReference type="InterPro" id="IPR006931">
    <property type="entry name" value="Calcipressin"/>
</dbReference>
<dbReference type="InterPro" id="IPR012677">
    <property type="entry name" value="Nucleotide-bd_a/b_plait_sf"/>
</dbReference>
<dbReference type="InterPro" id="IPR035979">
    <property type="entry name" value="RBD_domain_sf"/>
</dbReference>
<dbReference type="PANTHER" id="PTHR10300">
    <property type="entry name" value="CALCIPRESSIN"/>
    <property type="match status" value="1"/>
</dbReference>
<dbReference type="PANTHER" id="PTHR10300:SF6">
    <property type="entry name" value="CALCIPRESSIN-3"/>
    <property type="match status" value="1"/>
</dbReference>
<dbReference type="Pfam" id="PF04847">
    <property type="entry name" value="Calcipressin"/>
    <property type="match status" value="1"/>
</dbReference>
<dbReference type="SUPFAM" id="SSF54928">
    <property type="entry name" value="RNA-binding domain, RBD"/>
    <property type="match status" value="1"/>
</dbReference>